<evidence type="ECO:0000255" key="1">
    <source>
        <dbReference type="HAMAP-Rule" id="MF_00044"/>
    </source>
</evidence>
<dbReference type="EC" id="6.1.1.12" evidence="1"/>
<dbReference type="EMBL" id="CP000967">
    <property type="protein sequence ID" value="ACD59837.1"/>
    <property type="molecule type" value="Genomic_DNA"/>
</dbReference>
<dbReference type="RefSeq" id="WP_012445358.1">
    <property type="nucleotide sequence ID" value="NC_010717.2"/>
</dbReference>
<dbReference type="SMR" id="B2STK7"/>
<dbReference type="KEGG" id="xop:PXO_01552"/>
<dbReference type="eggNOG" id="COG0173">
    <property type="taxonomic scope" value="Bacteria"/>
</dbReference>
<dbReference type="HOGENOM" id="CLU_014330_3_2_6"/>
<dbReference type="Proteomes" id="UP000001740">
    <property type="component" value="Chromosome"/>
</dbReference>
<dbReference type="GO" id="GO:0005737">
    <property type="term" value="C:cytoplasm"/>
    <property type="evidence" value="ECO:0007669"/>
    <property type="project" value="UniProtKB-SubCell"/>
</dbReference>
<dbReference type="GO" id="GO:0004815">
    <property type="term" value="F:aspartate-tRNA ligase activity"/>
    <property type="evidence" value="ECO:0007669"/>
    <property type="project" value="UniProtKB-UniRule"/>
</dbReference>
<dbReference type="GO" id="GO:0005524">
    <property type="term" value="F:ATP binding"/>
    <property type="evidence" value="ECO:0007669"/>
    <property type="project" value="UniProtKB-UniRule"/>
</dbReference>
<dbReference type="GO" id="GO:0003676">
    <property type="term" value="F:nucleic acid binding"/>
    <property type="evidence" value="ECO:0007669"/>
    <property type="project" value="InterPro"/>
</dbReference>
<dbReference type="GO" id="GO:0006422">
    <property type="term" value="P:aspartyl-tRNA aminoacylation"/>
    <property type="evidence" value="ECO:0007669"/>
    <property type="project" value="UniProtKB-UniRule"/>
</dbReference>
<dbReference type="CDD" id="cd00777">
    <property type="entry name" value="AspRS_core"/>
    <property type="match status" value="1"/>
</dbReference>
<dbReference type="CDD" id="cd04317">
    <property type="entry name" value="EcAspRS_like_N"/>
    <property type="match status" value="1"/>
</dbReference>
<dbReference type="Gene3D" id="3.30.930.10">
    <property type="entry name" value="Bira Bifunctional Protein, Domain 2"/>
    <property type="match status" value="1"/>
</dbReference>
<dbReference type="Gene3D" id="3.30.1360.30">
    <property type="entry name" value="GAD-like domain"/>
    <property type="match status" value="1"/>
</dbReference>
<dbReference type="Gene3D" id="2.40.50.140">
    <property type="entry name" value="Nucleic acid-binding proteins"/>
    <property type="match status" value="1"/>
</dbReference>
<dbReference type="HAMAP" id="MF_00044">
    <property type="entry name" value="Asp_tRNA_synth_type1"/>
    <property type="match status" value="1"/>
</dbReference>
<dbReference type="InterPro" id="IPR004364">
    <property type="entry name" value="Aa-tRNA-synt_II"/>
</dbReference>
<dbReference type="InterPro" id="IPR006195">
    <property type="entry name" value="aa-tRNA-synth_II"/>
</dbReference>
<dbReference type="InterPro" id="IPR045864">
    <property type="entry name" value="aa-tRNA-synth_II/BPL/LPL"/>
</dbReference>
<dbReference type="InterPro" id="IPR004524">
    <property type="entry name" value="Asp-tRNA-ligase_1"/>
</dbReference>
<dbReference type="InterPro" id="IPR047089">
    <property type="entry name" value="Asp-tRNA-ligase_1_N"/>
</dbReference>
<dbReference type="InterPro" id="IPR002312">
    <property type="entry name" value="Asp/Asn-tRNA-synth_IIb"/>
</dbReference>
<dbReference type="InterPro" id="IPR047090">
    <property type="entry name" value="AspRS_core"/>
</dbReference>
<dbReference type="InterPro" id="IPR004115">
    <property type="entry name" value="GAD-like_sf"/>
</dbReference>
<dbReference type="InterPro" id="IPR029351">
    <property type="entry name" value="GAD_dom"/>
</dbReference>
<dbReference type="InterPro" id="IPR012340">
    <property type="entry name" value="NA-bd_OB-fold"/>
</dbReference>
<dbReference type="InterPro" id="IPR004365">
    <property type="entry name" value="NA-bd_OB_tRNA"/>
</dbReference>
<dbReference type="NCBIfam" id="TIGR00459">
    <property type="entry name" value="aspS_bact"/>
    <property type="match status" value="1"/>
</dbReference>
<dbReference type="NCBIfam" id="NF001750">
    <property type="entry name" value="PRK00476.1"/>
    <property type="match status" value="1"/>
</dbReference>
<dbReference type="PANTHER" id="PTHR22594:SF5">
    <property type="entry name" value="ASPARTATE--TRNA LIGASE, MITOCHONDRIAL"/>
    <property type="match status" value="1"/>
</dbReference>
<dbReference type="PANTHER" id="PTHR22594">
    <property type="entry name" value="ASPARTYL/LYSYL-TRNA SYNTHETASE"/>
    <property type="match status" value="1"/>
</dbReference>
<dbReference type="Pfam" id="PF02938">
    <property type="entry name" value="GAD"/>
    <property type="match status" value="1"/>
</dbReference>
<dbReference type="Pfam" id="PF00152">
    <property type="entry name" value="tRNA-synt_2"/>
    <property type="match status" value="1"/>
</dbReference>
<dbReference type="Pfam" id="PF01336">
    <property type="entry name" value="tRNA_anti-codon"/>
    <property type="match status" value="1"/>
</dbReference>
<dbReference type="PRINTS" id="PR01042">
    <property type="entry name" value="TRNASYNTHASP"/>
</dbReference>
<dbReference type="SUPFAM" id="SSF55681">
    <property type="entry name" value="Class II aaRS and biotin synthetases"/>
    <property type="match status" value="1"/>
</dbReference>
<dbReference type="SUPFAM" id="SSF55261">
    <property type="entry name" value="GAD domain-like"/>
    <property type="match status" value="1"/>
</dbReference>
<dbReference type="SUPFAM" id="SSF50249">
    <property type="entry name" value="Nucleic acid-binding proteins"/>
    <property type="match status" value="1"/>
</dbReference>
<dbReference type="PROSITE" id="PS50862">
    <property type="entry name" value="AA_TRNA_LIGASE_II"/>
    <property type="match status" value="1"/>
</dbReference>
<keyword id="KW-0030">Aminoacyl-tRNA synthetase</keyword>
<keyword id="KW-0067">ATP-binding</keyword>
<keyword id="KW-0963">Cytoplasm</keyword>
<keyword id="KW-0436">Ligase</keyword>
<keyword id="KW-0547">Nucleotide-binding</keyword>
<keyword id="KW-0648">Protein biosynthesis</keyword>
<reference key="1">
    <citation type="journal article" date="2008" name="BMC Genomics">
        <title>Genome sequence and rapid evolution of the rice pathogen Xanthomonas oryzae pv. oryzae PXO99A.</title>
        <authorList>
            <person name="Salzberg S.L."/>
            <person name="Sommer D.D."/>
            <person name="Schatz M.C."/>
            <person name="Phillippy A.M."/>
            <person name="Rabinowicz P.D."/>
            <person name="Tsuge S."/>
            <person name="Furutani A."/>
            <person name="Ochiai H."/>
            <person name="Delcher A.L."/>
            <person name="Kelley D."/>
            <person name="Madupu R."/>
            <person name="Puiu D."/>
            <person name="Radune D."/>
            <person name="Shumway M."/>
            <person name="Trapnell C."/>
            <person name="Aparna G."/>
            <person name="Jha G."/>
            <person name="Pandey A."/>
            <person name="Patil P.B."/>
            <person name="Ishihara H."/>
            <person name="Meyer D.F."/>
            <person name="Szurek B."/>
            <person name="Verdier V."/>
            <person name="Koebnik R."/>
            <person name="Dow J.M."/>
            <person name="Ryan R.P."/>
            <person name="Hirata H."/>
            <person name="Tsuyumu S."/>
            <person name="Won Lee S."/>
            <person name="Seo Y.-S."/>
            <person name="Sriariyanum M."/>
            <person name="Ronald P.C."/>
            <person name="Sonti R.V."/>
            <person name="Van Sluys M.-A."/>
            <person name="Leach J.E."/>
            <person name="White F.F."/>
            <person name="Bogdanove A.J."/>
        </authorList>
    </citation>
    <scope>NUCLEOTIDE SEQUENCE [LARGE SCALE GENOMIC DNA]</scope>
    <source>
        <strain>PXO99A</strain>
    </source>
</reference>
<sequence>MRTHFCGLVDETLIGQTVTLAGWTDVARNLGGVCFIDLRDHEGIVQVTVEPVAGDDASAELFKVAASLGYEDVLQVEGVVRARHAVNDKLRTGKVEVIATRISILNKAAPLPFHAHENPGEETRLKYRYLDLRRPEMQRMQRTRIKLVQALRRHLDARDFQDIETPILTKATPEGARDFLVPARMHPGEFYALPQSPQLFKQILMVAGFDRYYQIARCFRDEALRADRQLEFTQLDMEFAFVRERDVQDFVEDMMRAIFKEVVDVDLAAQFPRMTWAEAMRRYGSDKPDLRIALELVDVAELVKSSEFPVFTAAANDADGRVAALRIPGGATLSRKQIDDYAAHAAKYGAKGLAYIKLSETGEVNSPIAKFFGEEAFAALLKHVGAGNGDIVFFGAGGYTKVSDFMGALRLKAGKEFDLVAEGWAPLWVTDFPMFEWDDEAQRYVALHHPFTAPAVDDIADLRANARTAVSRGYDMVLNGNEIGGGSIRIHRPDMQSAVFELLGIGAEEARAKFGFLLDALNYGAPPHGGIAFGIDRIAALMAGTESIRDVIPFPKTTGAQDLMTDAPSPIAADQLAEVHVQIRAKQV</sequence>
<accession>B2STK7</accession>
<protein>
    <recommendedName>
        <fullName evidence="1">Aspartate--tRNA ligase</fullName>
        <ecNumber evidence="1">6.1.1.12</ecNumber>
    </recommendedName>
    <alternativeName>
        <fullName evidence="1">Aspartyl-tRNA synthetase</fullName>
        <shortName evidence="1">AspRS</shortName>
    </alternativeName>
</protein>
<name>SYD_XANOP</name>
<gene>
    <name evidence="1" type="primary">aspS</name>
    <name type="ordered locus">PXO_01552</name>
</gene>
<feature type="chain" id="PRO_1000091062" description="Aspartate--tRNA ligase">
    <location>
        <begin position="1"/>
        <end position="588"/>
    </location>
</feature>
<feature type="region of interest" description="Aspartate" evidence="1">
    <location>
        <begin position="198"/>
        <end position="201"/>
    </location>
</feature>
<feature type="binding site" evidence="1">
    <location>
        <position position="174"/>
    </location>
    <ligand>
        <name>L-aspartate</name>
        <dbReference type="ChEBI" id="CHEBI:29991"/>
    </ligand>
</feature>
<feature type="binding site" evidence="1">
    <location>
        <begin position="220"/>
        <end position="222"/>
    </location>
    <ligand>
        <name>ATP</name>
        <dbReference type="ChEBI" id="CHEBI:30616"/>
    </ligand>
</feature>
<feature type="binding site" evidence="1">
    <location>
        <position position="220"/>
    </location>
    <ligand>
        <name>L-aspartate</name>
        <dbReference type="ChEBI" id="CHEBI:29991"/>
    </ligand>
</feature>
<feature type="binding site" evidence="1">
    <location>
        <position position="229"/>
    </location>
    <ligand>
        <name>ATP</name>
        <dbReference type="ChEBI" id="CHEBI:30616"/>
    </ligand>
</feature>
<feature type="binding site" evidence="1">
    <location>
        <position position="448"/>
    </location>
    <ligand>
        <name>L-aspartate</name>
        <dbReference type="ChEBI" id="CHEBI:29991"/>
    </ligand>
</feature>
<feature type="binding site" evidence="1">
    <location>
        <position position="482"/>
    </location>
    <ligand>
        <name>ATP</name>
        <dbReference type="ChEBI" id="CHEBI:30616"/>
    </ligand>
</feature>
<feature type="binding site" evidence="1">
    <location>
        <position position="489"/>
    </location>
    <ligand>
        <name>L-aspartate</name>
        <dbReference type="ChEBI" id="CHEBI:29991"/>
    </ligand>
</feature>
<feature type="binding site" evidence="1">
    <location>
        <begin position="534"/>
        <end position="537"/>
    </location>
    <ligand>
        <name>ATP</name>
        <dbReference type="ChEBI" id="CHEBI:30616"/>
    </ligand>
</feature>
<comment type="function">
    <text evidence="1">Catalyzes the attachment of L-aspartate to tRNA(Asp) in a two-step reaction: L-aspartate is first activated by ATP to form Asp-AMP and then transferred to the acceptor end of tRNA(Asp).</text>
</comment>
<comment type="catalytic activity">
    <reaction evidence="1">
        <text>tRNA(Asp) + L-aspartate + ATP = L-aspartyl-tRNA(Asp) + AMP + diphosphate</text>
        <dbReference type="Rhea" id="RHEA:19649"/>
        <dbReference type="Rhea" id="RHEA-COMP:9660"/>
        <dbReference type="Rhea" id="RHEA-COMP:9678"/>
        <dbReference type="ChEBI" id="CHEBI:29991"/>
        <dbReference type="ChEBI" id="CHEBI:30616"/>
        <dbReference type="ChEBI" id="CHEBI:33019"/>
        <dbReference type="ChEBI" id="CHEBI:78442"/>
        <dbReference type="ChEBI" id="CHEBI:78516"/>
        <dbReference type="ChEBI" id="CHEBI:456215"/>
        <dbReference type="EC" id="6.1.1.12"/>
    </reaction>
</comment>
<comment type="subunit">
    <text evidence="1">Homodimer.</text>
</comment>
<comment type="subcellular location">
    <subcellularLocation>
        <location evidence="1">Cytoplasm</location>
    </subcellularLocation>
</comment>
<comment type="similarity">
    <text evidence="1">Belongs to the class-II aminoacyl-tRNA synthetase family. Type 1 subfamily.</text>
</comment>
<organism>
    <name type="scientific">Xanthomonas oryzae pv. oryzae (strain PXO99A)</name>
    <dbReference type="NCBI Taxonomy" id="360094"/>
    <lineage>
        <taxon>Bacteria</taxon>
        <taxon>Pseudomonadati</taxon>
        <taxon>Pseudomonadota</taxon>
        <taxon>Gammaproteobacteria</taxon>
        <taxon>Lysobacterales</taxon>
        <taxon>Lysobacteraceae</taxon>
        <taxon>Xanthomonas</taxon>
    </lineage>
</organism>
<proteinExistence type="inferred from homology"/>